<sequence>MKTKYSYYNNQLTLIHQGKIVFLKGFIFRKRNLGKTLFFDLRDVSGIVQLLVKENNPQYDKIALIKLETVVQIKGQVIERINKNPDLPTGDIEILVSHIEILSEAQTLPLNVFQSQESLEETRLKYRYLDLRNPEVKHFLIQRHHITQSIRQTLLKNDFLELETPILSKSTPEGARDYLVPSRIYPGNFYALPQSPQLFKQLYMIAGFERYFQVARCFRDEDLRSDRQPEFSQIDIETSFLNQDEIMSLTEEIIVDLFANIWKKPLLQPFLRLTYQQAFELYGSDKPDLRNPLKITDFTTFFDTNTYSQNIFAGKIKGFKVSKTAFLTRRKLDEYQLFFSKHFNLKLFSFVKKNDKIIGGISQFIQDDSFLKNEEICFVVSGKKDIIHKALGIFRTKLALDLSLVDTTQEALLWIVDFPLFETIQEDLSPPNRLYSLHHPFTAPRDATILKSNPQKALANAYDLVWNGYEVGGGSLRINNHQTQELIFSLLGFLQEEVQNRFGFLIEALKYGTPPHGGIALGLDRLVMLFTKTNNIKDVIAFPKTQSAKDLMLEAPSAVNQEQLNTLKLQLKCNFN</sequence>
<comment type="function">
    <text evidence="1">Catalyzes the attachment of L-aspartate to tRNA(Asp) in a two-step reaction: L-aspartate is first activated by ATP to form Asp-AMP and then transferred to the acceptor end of tRNA(Asp).</text>
</comment>
<comment type="catalytic activity">
    <reaction evidence="1">
        <text>tRNA(Asp) + L-aspartate + ATP = L-aspartyl-tRNA(Asp) + AMP + diphosphate</text>
        <dbReference type="Rhea" id="RHEA:19649"/>
        <dbReference type="Rhea" id="RHEA-COMP:9660"/>
        <dbReference type="Rhea" id="RHEA-COMP:9678"/>
        <dbReference type="ChEBI" id="CHEBI:29991"/>
        <dbReference type="ChEBI" id="CHEBI:30616"/>
        <dbReference type="ChEBI" id="CHEBI:33019"/>
        <dbReference type="ChEBI" id="CHEBI:78442"/>
        <dbReference type="ChEBI" id="CHEBI:78516"/>
        <dbReference type="ChEBI" id="CHEBI:456215"/>
        <dbReference type="EC" id="6.1.1.12"/>
    </reaction>
</comment>
<comment type="subunit">
    <text evidence="1">Homodimer.</text>
</comment>
<comment type="subcellular location">
    <subcellularLocation>
        <location evidence="1">Cytoplasm</location>
    </subcellularLocation>
</comment>
<comment type="similarity">
    <text evidence="1">Belongs to the class-II aminoacyl-tRNA synthetase family. Type 1 subfamily.</text>
</comment>
<evidence type="ECO:0000255" key="1">
    <source>
        <dbReference type="HAMAP-Rule" id="MF_00044"/>
    </source>
</evidence>
<feature type="chain" id="PRO_0000235507" description="Aspartate--tRNA ligase">
    <location>
        <begin position="1"/>
        <end position="576"/>
    </location>
</feature>
<feature type="region of interest" description="Aspartate" evidence="1">
    <location>
        <begin position="197"/>
        <end position="200"/>
    </location>
</feature>
<feature type="binding site" evidence="1">
    <location>
        <position position="173"/>
    </location>
    <ligand>
        <name>L-aspartate</name>
        <dbReference type="ChEBI" id="CHEBI:29991"/>
    </ligand>
</feature>
<feature type="binding site" evidence="1">
    <location>
        <begin position="219"/>
        <end position="221"/>
    </location>
    <ligand>
        <name>ATP</name>
        <dbReference type="ChEBI" id="CHEBI:30616"/>
    </ligand>
</feature>
<feature type="binding site" evidence="1">
    <location>
        <position position="219"/>
    </location>
    <ligand>
        <name>L-aspartate</name>
        <dbReference type="ChEBI" id="CHEBI:29991"/>
    </ligand>
</feature>
<feature type="binding site" evidence="1">
    <location>
        <position position="228"/>
    </location>
    <ligand>
        <name>ATP</name>
        <dbReference type="ChEBI" id="CHEBI:30616"/>
    </ligand>
</feature>
<feature type="binding site" evidence="1">
    <location>
        <position position="438"/>
    </location>
    <ligand>
        <name>L-aspartate</name>
        <dbReference type="ChEBI" id="CHEBI:29991"/>
    </ligand>
</feature>
<feature type="binding site" evidence="1">
    <location>
        <position position="470"/>
    </location>
    <ligand>
        <name>ATP</name>
        <dbReference type="ChEBI" id="CHEBI:30616"/>
    </ligand>
</feature>
<feature type="binding site" evidence="1">
    <location>
        <position position="477"/>
    </location>
    <ligand>
        <name>L-aspartate</name>
        <dbReference type="ChEBI" id="CHEBI:29991"/>
    </ligand>
</feature>
<feature type="binding site" evidence="1">
    <location>
        <begin position="522"/>
        <end position="525"/>
    </location>
    <ligand>
        <name>ATP</name>
        <dbReference type="ChEBI" id="CHEBI:30616"/>
    </ligand>
</feature>
<gene>
    <name evidence="1" type="primary">aspS</name>
    <name type="ordered locus">AYWB_593</name>
</gene>
<organism>
    <name type="scientific">Aster yellows witches'-broom phytoplasma (strain AYWB)</name>
    <dbReference type="NCBI Taxonomy" id="322098"/>
    <lineage>
        <taxon>Bacteria</taxon>
        <taxon>Bacillati</taxon>
        <taxon>Mycoplasmatota</taxon>
        <taxon>Mollicutes</taxon>
        <taxon>Acholeplasmatales</taxon>
        <taxon>Acholeplasmataceae</taxon>
        <taxon>Candidatus Phytoplasma</taxon>
        <taxon>16SrI (Aster yellows group)</taxon>
    </lineage>
</organism>
<dbReference type="EC" id="6.1.1.12" evidence="1"/>
<dbReference type="EMBL" id="CP000061">
    <property type="protein sequence ID" value="ABC65710.1"/>
    <property type="molecule type" value="Genomic_DNA"/>
</dbReference>
<dbReference type="RefSeq" id="WP_011412872.1">
    <property type="nucleotide sequence ID" value="NC_007716.1"/>
</dbReference>
<dbReference type="SMR" id="Q2NIN3"/>
<dbReference type="STRING" id="322098.AYWB_593"/>
<dbReference type="KEGG" id="ayw:AYWB_593"/>
<dbReference type="eggNOG" id="COG0173">
    <property type="taxonomic scope" value="Bacteria"/>
</dbReference>
<dbReference type="HOGENOM" id="CLU_014330_3_2_14"/>
<dbReference type="OrthoDB" id="9801152at2"/>
<dbReference type="PhylomeDB" id="Q2NIN3"/>
<dbReference type="Proteomes" id="UP000001934">
    <property type="component" value="Chromosome"/>
</dbReference>
<dbReference type="GO" id="GO:0005737">
    <property type="term" value="C:cytoplasm"/>
    <property type="evidence" value="ECO:0007669"/>
    <property type="project" value="UniProtKB-SubCell"/>
</dbReference>
<dbReference type="GO" id="GO:0004815">
    <property type="term" value="F:aspartate-tRNA ligase activity"/>
    <property type="evidence" value="ECO:0007669"/>
    <property type="project" value="UniProtKB-UniRule"/>
</dbReference>
<dbReference type="GO" id="GO:0005524">
    <property type="term" value="F:ATP binding"/>
    <property type="evidence" value="ECO:0007669"/>
    <property type="project" value="UniProtKB-UniRule"/>
</dbReference>
<dbReference type="GO" id="GO:0003676">
    <property type="term" value="F:nucleic acid binding"/>
    <property type="evidence" value="ECO:0007669"/>
    <property type="project" value="InterPro"/>
</dbReference>
<dbReference type="GO" id="GO:0006422">
    <property type="term" value="P:aspartyl-tRNA aminoacylation"/>
    <property type="evidence" value="ECO:0007669"/>
    <property type="project" value="UniProtKB-UniRule"/>
</dbReference>
<dbReference type="CDD" id="cd00777">
    <property type="entry name" value="AspRS_core"/>
    <property type="match status" value="1"/>
</dbReference>
<dbReference type="CDD" id="cd04317">
    <property type="entry name" value="EcAspRS_like_N"/>
    <property type="match status" value="1"/>
</dbReference>
<dbReference type="Gene3D" id="3.30.930.10">
    <property type="entry name" value="Bira Bifunctional Protein, Domain 2"/>
    <property type="match status" value="1"/>
</dbReference>
<dbReference type="Gene3D" id="3.30.1360.30">
    <property type="entry name" value="GAD-like domain"/>
    <property type="match status" value="1"/>
</dbReference>
<dbReference type="Gene3D" id="2.40.50.140">
    <property type="entry name" value="Nucleic acid-binding proteins"/>
    <property type="match status" value="1"/>
</dbReference>
<dbReference type="HAMAP" id="MF_00044">
    <property type="entry name" value="Asp_tRNA_synth_type1"/>
    <property type="match status" value="1"/>
</dbReference>
<dbReference type="InterPro" id="IPR004364">
    <property type="entry name" value="Aa-tRNA-synt_II"/>
</dbReference>
<dbReference type="InterPro" id="IPR006195">
    <property type="entry name" value="aa-tRNA-synth_II"/>
</dbReference>
<dbReference type="InterPro" id="IPR045864">
    <property type="entry name" value="aa-tRNA-synth_II/BPL/LPL"/>
</dbReference>
<dbReference type="InterPro" id="IPR004524">
    <property type="entry name" value="Asp-tRNA-ligase_1"/>
</dbReference>
<dbReference type="InterPro" id="IPR047089">
    <property type="entry name" value="Asp-tRNA-ligase_1_N"/>
</dbReference>
<dbReference type="InterPro" id="IPR002312">
    <property type="entry name" value="Asp/Asn-tRNA-synth_IIb"/>
</dbReference>
<dbReference type="InterPro" id="IPR047090">
    <property type="entry name" value="AspRS_core"/>
</dbReference>
<dbReference type="InterPro" id="IPR004115">
    <property type="entry name" value="GAD-like_sf"/>
</dbReference>
<dbReference type="InterPro" id="IPR012340">
    <property type="entry name" value="NA-bd_OB-fold"/>
</dbReference>
<dbReference type="InterPro" id="IPR004365">
    <property type="entry name" value="NA-bd_OB_tRNA"/>
</dbReference>
<dbReference type="NCBIfam" id="TIGR00459">
    <property type="entry name" value="aspS_bact"/>
    <property type="match status" value="1"/>
</dbReference>
<dbReference type="NCBIfam" id="NF001750">
    <property type="entry name" value="PRK00476.1"/>
    <property type="match status" value="1"/>
</dbReference>
<dbReference type="PANTHER" id="PTHR22594:SF5">
    <property type="entry name" value="ASPARTATE--TRNA LIGASE, MITOCHONDRIAL"/>
    <property type="match status" value="1"/>
</dbReference>
<dbReference type="PANTHER" id="PTHR22594">
    <property type="entry name" value="ASPARTYL/LYSYL-TRNA SYNTHETASE"/>
    <property type="match status" value="1"/>
</dbReference>
<dbReference type="Pfam" id="PF00152">
    <property type="entry name" value="tRNA-synt_2"/>
    <property type="match status" value="1"/>
</dbReference>
<dbReference type="Pfam" id="PF01336">
    <property type="entry name" value="tRNA_anti-codon"/>
    <property type="match status" value="1"/>
</dbReference>
<dbReference type="PRINTS" id="PR01042">
    <property type="entry name" value="TRNASYNTHASP"/>
</dbReference>
<dbReference type="SUPFAM" id="SSF55681">
    <property type="entry name" value="Class II aaRS and biotin synthetases"/>
    <property type="match status" value="1"/>
</dbReference>
<dbReference type="SUPFAM" id="SSF55261">
    <property type="entry name" value="GAD domain-like"/>
    <property type="match status" value="1"/>
</dbReference>
<dbReference type="SUPFAM" id="SSF50249">
    <property type="entry name" value="Nucleic acid-binding proteins"/>
    <property type="match status" value="1"/>
</dbReference>
<dbReference type="PROSITE" id="PS50862">
    <property type="entry name" value="AA_TRNA_LIGASE_II"/>
    <property type="match status" value="1"/>
</dbReference>
<keyword id="KW-0030">Aminoacyl-tRNA synthetase</keyword>
<keyword id="KW-0067">ATP-binding</keyword>
<keyword id="KW-0963">Cytoplasm</keyword>
<keyword id="KW-0436">Ligase</keyword>
<keyword id="KW-0547">Nucleotide-binding</keyword>
<keyword id="KW-0648">Protein biosynthesis</keyword>
<proteinExistence type="inferred from homology"/>
<accession>Q2NIN3</accession>
<protein>
    <recommendedName>
        <fullName evidence="1">Aspartate--tRNA ligase</fullName>
        <ecNumber evidence="1">6.1.1.12</ecNumber>
    </recommendedName>
    <alternativeName>
        <fullName evidence="1">Aspartyl-tRNA synthetase</fullName>
        <shortName evidence="1">AspRS</shortName>
    </alternativeName>
</protein>
<reference key="1">
    <citation type="journal article" date="2006" name="J. Bacteriol.">
        <title>Living with genome instability: the adaptation of phytoplasmas to diverse environments of their insect and plant hosts.</title>
        <authorList>
            <person name="Bai X."/>
            <person name="Zhang J."/>
            <person name="Ewing A."/>
            <person name="Miller S.A."/>
            <person name="Jancso Radek A."/>
            <person name="Shevchenko D.V."/>
            <person name="Tsukerman K."/>
            <person name="Walunas T."/>
            <person name="Lapidus A."/>
            <person name="Campbell J.W."/>
            <person name="Hogenhout S.A."/>
        </authorList>
    </citation>
    <scope>NUCLEOTIDE SEQUENCE [LARGE SCALE GENOMIC DNA]</scope>
    <source>
        <strain>AYWB</strain>
    </source>
</reference>
<name>SYD_AYWBP</name>